<reference key="1">
    <citation type="journal article" date="2004" name="Eur. J. Biochem.">
        <title>Subunit composition of the glycyl radical enzyme p-hydroxyphenylacetate decarboxylase. A small subunit, HpdC, is essential for catalytic activity.</title>
        <authorList>
            <person name="Andrei P.I."/>
            <person name="Pierik A.J."/>
            <person name="Zauner S."/>
            <person name="Andrei-Selmer L.C."/>
            <person name="Selmer T."/>
        </authorList>
    </citation>
    <scope>NUCLEOTIDE SEQUENCE [GENOMIC DNA]</scope>
    <scope>SUBUNIT</scope>
    <scope>ACTIVATION BY HPDA</scope>
    <source>
        <strain evidence="12">ATCC 9689 / DSM 1296 / BCRC 10642 / JCM 1296 / NCIMB 10666 / NCTC 11209 / 90556-M6S</strain>
    </source>
</reference>
<reference key="2">
    <citation type="journal article" date="2001" name="Eur. J. Biochem.">
        <title>p-Hydroxyphenylacetate decarboxylase from Clostridium difficile. A novel glycyl radical enzyme catalysing the formation of p-cresol.</title>
        <authorList>
            <person name="Selmer T."/>
            <person name="Andrei P.I."/>
        </authorList>
    </citation>
    <scope>PROTEIN SEQUENCE OF 2-15</scope>
    <scope>FUNCTION</scope>
    <scope>CATALYTIC ACTIVITY</scope>
    <scope>BIOPHYSICOCHEMICAL PROPERTIES</scope>
    <scope>ACTIVITY REGULATION</scope>
    <scope>REACTION MECHANISM</scope>
    <source>
        <strain evidence="4">ATCC 9689 / DSM 1296 / BCRC 10642 / JCM 1296 / NCIMB 10666 / NCTC 11209 / 90556-M6S</strain>
    </source>
</reference>
<reference key="3">
    <citation type="journal article" date="2006" name="Biochemistry">
        <title>4-Hydroxyphenylacetate decarboxylases: properties of a novel subclass of glycyl radical enzyme systems.</title>
        <authorList>
            <person name="Yu L."/>
            <person name="Blaser M."/>
            <person name="Andrei P.I."/>
            <person name="Pierik A.J."/>
            <person name="Selmer T."/>
        </authorList>
    </citation>
    <scope>FUNCTION</scope>
    <scope>CATALYTIC ACTIVITY</scope>
    <scope>BIOPHYSICOCHEMICAL PROPERTIES</scope>
    <scope>ACTIVATION BY HPDA</scope>
    <scope>SUBUNIT</scope>
    <scope>SERINE PHOSPHORYLATION</scope>
    <source>
        <strain evidence="6">ATCC 9689 / DSM 1296 / BCRC 10642 / JCM 1296 / NCIMB 10666 / NCTC 11209 / 90556-M6S</strain>
    </source>
</reference>
<organism>
    <name type="scientific">Clostridioides difficile</name>
    <name type="common">Peptoclostridium difficile</name>
    <dbReference type="NCBI Taxonomy" id="1496"/>
    <lineage>
        <taxon>Bacteria</taxon>
        <taxon>Bacillati</taxon>
        <taxon>Bacillota</taxon>
        <taxon>Clostridia</taxon>
        <taxon>Peptostreptococcales</taxon>
        <taxon>Peptostreptococcaceae</taxon>
        <taxon>Clostridioides</taxon>
    </lineage>
</organism>
<protein>
    <recommendedName>
        <fullName evidence="8">4-hydroxyphenylacetate decarboxylase glycyl radical subunit</fullName>
        <shortName>HPA decarboxylase glycyl radical subunit</shortName>
        <ecNumber evidence="4 6">4.1.1.83</ecNumber>
    </recommendedName>
    <alternativeName>
        <fullName evidence="1">4-hydroxyphenylacetate decarboxylase catalytic beta subunit</fullName>
    </alternativeName>
    <alternativeName>
        <fullName evidence="8">4-hydroxyphenylacetate decarboxylase large subunit</fullName>
    </alternativeName>
    <alternativeName>
        <fullName evidence="7">p-hydroxyphenylacetate decarboxylase large subunit</fullName>
    </alternativeName>
</protein>
<accession>Q84F16</accession>
<feature type="initiator methionine" description="Removed" evidence="4">
    <location>
        <position position="1"/>
    </location>
</feature>
<feature type="chain" id="PRO_5000070526" description="4-hydroxyphenylacetate decarboxylase glycyl radical subunit" evidence="4">
    <location>
        <begin position="2"/>
        <end position="902"/>
    </location>
</feature>
<feature type="domain" description="PFL" evidence="3">
    <location>
        <begin position="38"/>
        <end position="774"/>
    </location>
</feature>
<feature type="domain" description="Glycine radical" evidence="2">
    <location>
        <begin position="782"/>
        <end position="902"/>
    </location>
</feature>
<feature type="active site" description="Cysteine radical intermediate" evidence="1">
    <location>
        <position position="507"/>
    </location>
</feature>
<feature type="active site" description="Proton donor" evidence="1">
    <location>
        <position position="509"/>
    </location>
</feature>
<feature type="binding site" evidence="1">
    <location>
        <position position="348"/>
    </location>
    <ligand>
        <name>4-hydroxyphenylacetate</name>
        <dbReference type="ChEBI" id="CHEBI:48999"/>
    </ligand>
</feature>
<feature type="binding site" evidence="1">
    <location>
        <position position="507"/>
    </location>
    <ligand>
        <name>4-hydroxyphenylacetate</name>
        <dbReference type="ChEBI" id="CHEBI:48999"/>
    </ligand>
</feature>
<feature type="binding site" evidence="1">
    <location>
        <position position="540"/>
    </location>
    <ligand>
        <name>4-hydroxyphenylacetate</name>
        <dbReference type="ChEBI" id="CHEBI:48999"/>
    </ligand>
</feature>
<feature type="binding site" evidence="1">
    <location>
        <position position="641"/>
    </location>
    <ligand>
        <name>4-hydroxyphenylacetate</name>
        <dbReference type="ChEBI" id="CHEBI:48999"/>
    </ligand>
</feature>
<feature type="modified residue" description="Glycine radical" evidence="2">
    <location>
        <position position="877"/>
    </location>
</feature>
<sequence>MSQSKEDKIRSILEAKNIKSNFQNKENLSEFNEKKASKRAEDLLDVYYNTLSTADMEFPYWYNREYRKSDGDIPVVRRAKALKAAFSHMTPNIIPGEKIVMQKTRHYRGSFPMPWVSESFFVAQGEQMREEAKKLASNTADELTKFGSGGGNVTESFGNVVSIAGKFGMRKEEVPVLVKMAKEWVGKSVEDLGFHYEKMMPDYDLKENLMSTLICMFDSGYTLPQGREVINYFYPLNYGLDGIIEMAKECKKAVAGNASGDGLIGMDRLYFYEAVIQVIEGLQTWILNYAKHAKYLESIETDLEAKKEYSDLVEILEHIAHKQPRTFREALQLTYTIHIASVNEDAISGMSIGRFGQILYPWYEQDIEKGLITKEEVIELLELYRIKITCIDCFASAGVNGGVLSGNTFNTLSIGGLKEDGSTGANELEELLLEASMRCRTPQPSLTMLYDEKLPEDFLMKAAECTKLGSGYPAWVNNSNGTTFMMKQFADEGMTVEEARAFALGGCLETSPGCWKQLTLNGKTYSIAGGAGQSAGSGVHFIANPKILELVLMNGKDYRMNIQVFEPHNKPLDTYEEVIEVFKDYYKQAINVLERANNIELDIWRKFDTSIINSLLKPDCLDKGQHIGNMGYRYNATLNVETCGTVTMVNSFAALKKLVYDDKAFTIEEIKDAILNNFGFKDALEVGNYSMADQVKVDKTGKYDAIYKACLDAPKYGNNDLYADNILKNYEVWLSKVCEEAQSLYAKKMYPCQISVSTHGPQGAATLATPDGRLSGTTYSDGSVSAYAGTDKNGVYALFESATIWDQAVVQNSQMNLKLHPTTIKGQQGTKKLLDLTRSYLRKGGFHIQYNVVDSETLKDAQKNPDNYRQLMVRVAGFTQYWCELGKPIQDEVIARTEYEGV</sequence>
<gene>
    <name evidence="12" type="primary">hpdB</name>
</gene>
<keyword id="KW-0903">Direct protein sequencing</keyword>
<keyword id="KW-0456">Lyase</keyword>
<keyword id="KW-0556">Organic radical</keyword>
<keyword id="KW-0597">Phosphoprotein</keyword>
<proteinExistence type="evidence at protein level"/>
<dbReference type="EC" id="4.1.1.83" evidence="4 6"/>
<dbReference type="EMBL" id="AJ543425">
    <property type="protein sequence ID" value="CAD65889.1"/>
    <property type="molecule type" value="Genomic_DNA"/>
</dbReference>
<dbReference type="RefSeq" id="WP_009895226.1">
    <property type="nucleotide sequence ID" value="NZ_RRAL01000038.1"/>
</dbReference>
<dbReference type="SMR" id="Q84F16"/>
<dbReference type="KEGG" id="ag:CAD65889"/>
<dbReference type="BioCyc" id="MetaCyc:MONOMER-18507"/>
<dbReference type="BRENDA" id="4.1.1.83">
    <property type="organism ID" value="1473"/>
</dbReference>
<dbReference type="SABIO-RK" id="Q84F16"/>
<dbReference type="GO" id="GO:0005829">
    <property type="term" value="C:cytosol"/>
    <property type="evidence" value="ECO:0007669"/>
    <property type="project" value="TreeGrafter"/>
</dbReference>
<dbReference type="GO" id="GO:0043722">
    <property type="term" value="F:4-hydroxyphenylacetate decarboxylase activity"/>
    <property type="evidence" value="ECO:0007669"/>
    <property type="project" value="UniProtKB-EC"/>
</dbReference>
<dbReference type="Gene3D" id="3.20.70.20">
    <property type="match status" value="1"/>
</dbReference>
<dbReference type="InterPro" id="IPR001150">
    <property type="entry name" value="Gly_radical"/>
</dbReference>
<dbReference type="InterPro" id="IPR051215">
    <property type="entry name" value="GRE"/>
</dbReference>
<dbReference type="InterPro" id="IPR004184">
    <property type="entry name" value="PFL_dom"/>
</dbReference>
<dbReference type="NCBIfam" id="NF033715">
    <property type="entry name" value="glycyl_HPDL_Lrg"/>
    <property type="match status" value="1"/>
</dbReference>
<dbReference type="PANTHER" id="PTHR43641:SF2">
    <property type="entry name" value="DEHYDRATASE YBIW-RELATED"/>
    <property type="match status" value="1"/>
</dbReference>
<dbReference type="PANTHER" id="PTHR43641">
    <property type="entry name" value="FORMATE ACETYLTRANSFERASE 3-RELATED"/>
    <property type="match status" value="1"/>
</dbReference>
<dbReference type="Pfam" id="PF01228">
    <property type="entry name" value="Gly_radical"/>
    <property type="match status" value="1"/>
</dbReference>
<dbReference type="Pfam" id="PF02901">
    <property type="entry name" value="PFL-like"/>
    <property type="match status" value="1"/>
</dbReference>
<dbReference type="SUPFAM" id="SSF51998">
    <property type="entry name" value="PFL-like glycyl radical enzymes"/>
    <property type="match status" value="1"/>
</dbReference>
<dbReference type="PROSITE" id="PS51149">
    <property type="entry name" value="GLY_RADICAL_2"/>
    <property type="match status" value="1"/>
</dbReference>
<dbReference type="PROSITE" id="PS51554">
    <property type="entry name" value="PFL"/>
    <property type="match status" value="1"/>
</dbReference>
<comment type="function">
    <text evidence="1 4 6">Glycyl radical subunit of the HPA decarboxylase that decarboxylates phenylacetates with a hydroxyl group in the p-position. Active toward 4-hydroxyphenylacetate, 3,4-dihydroxyphenylacetate and to a lesser extent p-hydroxymandelate (2-hydroxy-2-(4-hydroxyphenyl)acetate), forming 4-methylphenol, 4-methylcatechol and 4-hydroxybenzylalcohol, respectively. Is likely involved in the catabolism of aromatic amino acids such as tyrosine fermentation. 4-methylphenol (p-cresol) formation provides metabolic toxicity, which may benefit the pathogen C.difficile by suppression of the endogenous gastrointestinal microflora, allowing the development of gastrointestinal infections (PubMed:11231288, PubMed:16878993). The large subunit is the catalytic subunit that binds the substrate (By similarity).</text>
</comment>
<comment type="catalytic activity">
    <reaction evidence="4 6">
        <text>4-hydroxyphenylacetate + H(+) = 4-methylphenol + CO2</text>
        <dbReference type="Rhea" id="RHEA:22732"/>
        <dbReference type="ChEBI" id="CHEBI:15378"/>
        <dbReference type="ChEBI" id="CHEBI:16526"/>
        <dbReference type="ChEBI" id="CHEBI:17847"/>
        <dbReference type="ChEBI" id="CHEBI:48999"/>
        <dbReference type="EC" id="4.1.1.83"/>
    </reaction>
    <physiologicalReaction direction="left-to-right" evidence="10 11">
        <dbReference type="Rhea" id="RHEA:22733"/>
    </physiologicalReaction>
</comment>
<comment type="catalytic activity">
    <reaction evidence="4 6">
        <text>3,4-dihydroxyphenylacetate + H(+) = 4-methylcatechol + CO2</text>
        <dbReference type="Rhea" id="RHEA:62556"/>
        <dbReference type="ChEBI" id="CHEBI:15378"/>
        <dbReference type="ChEBI" id="CHEBI:16526"/>
        <dbReference type="ChEBI" id="CHEBI:17254"/>
        <dbReference type="ChEBI" id="CHEBI:17612"/>
        <dbReference type="EC" id="4.1.1.83"/>
    </reaction>
    <physiologicalReaction direction="left-to-right" evidence="10 11">
        <dbReference type="Rhea" id="RHEA:62557"/>
    </physiologicalReaction>
</comment>
<comment type="catalytic activity">
    <reaction evidence="4">
        <text>2-hydroxy-2-(4-hydroxyphenyl)acetate + H(+) = 4-hydroxybenzyl alcohol + CO2</text>
        <dbReference type="Rhea" id="RHEA:62588"/>
        <dbReference type="ChEBI" id="CHEBI:15378"/>
        <dbReference type="ChEBI" id="CHEBI:16526"/>
        <dbReference type="ChEBI" id="CHEBI:32804"/>
        <dbReference type="ChEBI" id="CHEBI:67410"/>
    </reaction>
    <physiologicalReaction direction="left-to-right" evidence="10">
        <dbReference type="Rhea" id="RHEA:62589"/>
    </physiologicalReaction>
</comment>
<comment type="activity regulation">
    <text evidence="4">Enzyme activity catalyzed by the HPA decarboxylase complex is rapidly and irreversibly inactivated by oxygen. Competitively inhibited by p-hydroxyphenylacetamide. Not inhibited by m- or o-hydroxyphenyl-acetate, p-hydroxybenzoate or p-hydroxyphenylpropionate.</text>
</comment>
<comment type="biophysicochemical properties">
    <kinetics>
        <KM evidence="6">649 uM for 4-hydroxyphenylacetate</KM>
        <KM evidence="6">410 uM for 3,4-dihydroxyphenylacetate</KM>
        <Vmax evidence="6">14.97 umol/min/mg enzyme for the decarboxylation of 4-hydroxyphenylacetate</Vmax>
        <Vmax evidence="6">8.82 umol/min/mg enzyme for the decarboxylation of 3,4-hydroxyphenylacetate</Vmax>
        <text evidence="6">kcat is 110 sec(-1) for the decarboxylation of 4-hydroxyphenylacetate. kcat is 65 sec(-1) for the decarboxylation of 3,4-hydroxyphenylacetate.</text>
    </kinetics>
    <phDependence>
        <text evidence="4">Optimum pH is 7.0.</text>
    </phDependence>
    <temperatureDependence>
        <text evidence="4">Has a half-life of 15 minutes at 30 degrees Celsius.</text>
    </temperatureDependence>
</comment>
<comment type="subunit">
    <text evidence="5 6">Heterooctamer consisting of 4 large (HpdB) subunits and 4 small (HpdC) subunits. Also forms a catalytically inactive homodimer.</text>
</comment>
<comment type="PTM">
    <text evidence="6">Phosphorylated on serine. Phosphorylation may trigger the formation of the active heterooctamers and thereby regulates enzyme activity.</text>
</comment>
<comment type="PTM">
    <text evidence="5 6">Requires the activating protein HpdA to generate the key active site glycyl radical that is involved in catalysis.</text>
</comment>
<comment type="similarity">
    <text evidence="9">Belongs to the glycyl radical enzyme (GRE) family. HPAD subfamily.</text>
</comment>
<name>HPDL_CLODI</name>
<evidence type="ECO:0000250" key="1">
    <source>
        <dbReference type="UniProtKB" id="Q38HX4"/>
    </source>
</evidence>
<evidence type="ECO:0000255" key="2">
    <source>
        <dbReference type="PROSITE-ProRule" id="PRU00493"/>
    </source>
</evidence>
<evidence type="ECO:0000255" key="3">
    <source>
        <dbReference type="PROSITE-ProRule" id="PRU00887"/>
    </source>
</evidence>
<evidence type="ECO:0000269" key="4">
    <source>
    </source>
</evidence>
<evidence type="ECO:0000269" key="5">
    <source>
    </source>
</evidence>
<evidence type="ECO:0000269" key="6">
    <source>
    </source>
</evidence>
<evidence type="ECO:0000303" key="7">
    <source>
    </source>
</evidence>
<evidence type="ECO:0000303" key="8">
    <source>
    </source>
</evidence>
<evidence type="ECO:0000305" key="9"/>
<evidence type="ECO:0000305" key="10">
    <source>
    </source>
</evidence>
<evidence type="ECO:0000305" key="11">
    <source>
    </source>
</evidence>
<evidence type="ECO:0000312" key="12">
    <source>
        <dbReference type="EMBL" id="CAD65889.1"/>
    </source>
</evidence>